<reference key="1">
    <citation type="submission" date="2006-08" db="EMBL/GenBank/DDBJ databases">
        <title>Complete sequence of Maricaulis maris MCS10.</title>
        <authorList>
            <consortium name="US DOE Joint Genome Institute"/>
            <person name="Copeland A."/>
            <person name="Lucas S."/>
            <person name="Lapidus A."/>
            <person name="Barry K."/>
            <person name="Detter J.C."/>
            <person name="Glavina del Rio T."/>
            <person name="Hammon N."/>
            <person name="Israni S."/>
            <person name="Dalin E."/>
            <person name="Tice H."/>
            <person name="Pitluck S."/>
            <person name="Saunders E."/>
            <person name="Brettin T."/>
            <person name="Bruce D."/>
            <person name="Han C."/>
            <person name="Tapia R."/>
            <person name="Gilna P."/>
            <person name="Schmutz J."/>
            <person name="Larimer F."/>
            <person name="Land M."/>
            <person name="Hauser L."/>
            <person name="Kyrpides N."/>
            <person name="Mikhailova N."/>
            <person name="Viollier P."/>
            <person name="Stephens C."/>
            <person name="Richardson P."/>
        </authorList>
    </citation>
    <scope>NUCLEOTIDE SEQUENCE [LARGE SCALE GENOMIC DNA]</scope>
    <source>
        <strain>MCS10</strain>
    </source>
</reference>
<protein>
    <recommendedName>
        <fullName evidence="1">DNA-directed RNA polymerase subunit omega</fullName>
        <shortName evidence="1">RNAP omega subunit</shortName>
        <ecNumber evidence="1">2.7.7.6</ecNumber>
    </recommendedName>
    <alternativeName>
        <fullName evidence="1">RNA polymerase omega subunit</fullName>
    </alternativeName>
    <alternativeName>
        <fullName evidence="1">Transcriptase subunit omega</fullName>
    </alternativeName>
</protein>
<accession>Q0APB9</accession>
<organism>
    <name type="scientific">Maricaulis maris (strain MCS10)</name>
    <name type="common">Caulobacter maris</name>
    <dbReference type="NCBI Taxonomy" id="394221"/>
    <lineage>
        <taxon>Bacteria</taxon>
        <taxon>Pseudomonadati</taxon>
        <taxon>Pseudomonadota</taxon>
        <taxon>Alphaproteobacteria</taxon>
        <taxon>Maricaulales</taxon>
        <taxon>Maricaulaceae</taxon>
        <taxon>Maricaulis</taxon>
    </lineage>
</organism>
<dbReference type="EC" id="2.7.7.6" evidence="1"/>
<dbReference type="EMBL" id="CP000449">
    <property type="protein sequence ID" value="ABI65868.1"/>
    <property type="molecule type" value="Genomic_DNA"/>
</dbReference>
<dbReference type="RefSeq" id="WP_011643515.1">
    <property type="nucleotide sequence ID" value="NC_008347.1"/>
</dbReference>
<dbReference type="SMR" id="Q0APB9"/>
<dbReference type="STRING" id="394221.Mmar10_1576"/>
<dbReference type="KEGG" id="mmr:Mmar10_1576"/>
<dbReference type="eggNOG" id="COG1758">
    <property type="taxonomic scope" value="Bacteria"/>
</dbReference>
<dbReference type="HOGENOM" id="CLU_125406_2_0_5"/>
<dbReference type="OrthoDB" id="9796300at2"/>
<dbReference type="Proteomes" id="UP000001964">
    <property type="component" value="Chromosome"/>
</dbReference>
<dbReference type="GO" id="GO:0000428">
    <property type="term" value="C:DNA-directed RNA polymerase complex"/>
    <property type="evidence" value="ECO:0007669"/>
    <property type="project" value="UniProtKB-KW"/>
</dbReference>
<dbReference type="GO" id="GO:0003677">
    <property type="term" value="F:DNA binding"/>
    <property type="evidence" value="ECO:0007669"/>
    <property type="project" value="UniProtKB-UniRule"/>
</dbReference>
<dbReference type="GO" id="GO:0003899">
    <property type="term" value="F:DNA-directed RNA polymerase activity"/>
    <property type="evidence" value="ECO:0007669"/>
    <property type="project" value="UniProtKB-UniRule"/>
</dbReference>
<dbReference type="GO" id="GO:0006351">
    <property type="term" value="P:DNA-templated transcription"/>
    <property type="evidence" value="ECO:0007669"/>
    <property type="project" value="UniProtKB-UniRule"/>
</dbReference>
<dbReference type="Gene3D" id="3.90.940.10">
    <property type="match status" value="1"/>
</dbReference>
<dbReference type="HAMAP" id="MF_00366">
    <property type="entry name" value="RNApol_bact_RpoZ"/>
    <property type="match status" value="1"/>
</dbReference>
<dbReference type="InterPro" id="IPR003716">
    <property type="entry name" value="DNA-dir_RNA_pol_omega"/>
</dbReference>
<dbReference type="InterPro" id="IPR006110">
    <property type="entry name" value="Pol_omega/Rpo6/RPB6"/>
</dbReference>
<dbReference type="InterPro" id="IPR036161">
    <property type="entry name" value="RPB6/omega-like_sf"/>
</dbReference>
<dbReference type="NCBIfam" id="TIGR00690">
    <property type="entry name" value="rpoZ"/>
    <property type="match status" value="1"/>
</dbReference>
<dbReference type="PANTHER" id="PTHR34476">
    <property type="entry name" value="DNA-DIRECTED RNA POLYMERASE SUBUNIT OMEGA"/>
    <property type="match status" value="1"/>
</dbReference>
<dbReference type="PANTHER" id="PTHR34476:SF1">
    <property type="entry name" value="DNA-DIRECTED RNA POLYMERASE SUBUNIT OMEGA"/>
    <property type="match status" value="1"/>
</dbReference>
<dbReference type="Pfam" id="PF01192">
    <property type="entry name" value="RNA_pol_Rpb6"/>
    <property type="match status" value="1"/>
</dbReference>
<dbReference type="SMART" id="SM01409">
    <property type="entry name" value="RNA_pol_Rpb6"/>
    <property type="match status" value="1"/>
</dbReference>
<dbReference type="SUPFAM" id="SSF63562">
    <property type="entry name" value="RPB6/omega subunit-like"/>
    <property type="match status" value="1"/>
</dbReference>
<evidence type="ECO:0000255" key="1">
    <source>
        <dbReference type="HAMAP-Rule" id="MF_00366"/>
    </source>
</evidence>
<evidence type="ECO:0000256" key="2">
    <source>
        <dbReference type="SAM" id="MobiDB-lite"/>
    </source>
</evidence>
<comment type="function">
    <text evidence="1">Promotes RNA polymerase assembly. Latches the N- and C-terminal regions of the beta' subunit thereby facilitating its interaction with the beta and alpha subunits.</text>
</comment>
<comment type="catalytic activity">
    <reaction evidence="1">
        <text>RNA(n) + a ribonucleoside 5'-triphosphate = RNA(n+1) + diphosphate</text>
        <dbReference type="Rhea" id="RHEA:21248"/>
        <dbReference type="Rhea" id="RHEA-COMP:14527"/>
        <dbReference type="Rhea" id="RHEA-COMP:17342"/>
        <dbReference type="ChEBI" id="CHEBI:33019"/>
        <dbReference type="ChEBI" id="CHEBI:61557"/>
        <dbReference type="ChEBI" id="CHEBI:140395"/>
        <dbReference type="EC" id="2.7.7.6"/>
    </reaction>
</comment>
<comment type="subunit">
    <text evidence="1">The RNAP catalytic core consists of 2 alpha, 1 beta, 1 beta' and 1 omega subunit. When a sigma factor is associated with the core the holoenzyme is formed, which can initiate transcription.</text>
</comment>
<comment type="similarity">
    <text evidence="1">Belongs to the RNA polymerase subunit omega family.</text>
</comment>
<name>RPOZ_MARMM</name>
<proteinExistence type="inferred from homology"/>
<feature type="chain" id="PRO_1000005954" description="DNA-directed RNA polymerase subunit omega">
    <location>
        <begin position="1"/>
        <end position="123"/>
    </location>
</feature>
<feature type="region of interest" description="Disordered" evidence="2">
    <location>
        <begin position="72"/>
        <end position="100"/>
    </location>
</feature>
<sequence>MARVTVEDCIEKIPNRFRLVLMAAHRARNISAGSELTIDRDNDKNPVVALREIADETLDMDSLKDSLVNGLQRVLPSEDEEDAAREERGQQMEALPAPPVELDEAEMLKALQNDRDGAPDGRL</sequence>
<gene>
    <name evidence="1" type="primary">rpoZ</name>
    <name type="ordered locus">Mmar10_1576</name>
</gene>
<keyword id="KW-0240">DNA-directed RNA polymerase</keyword>
<keyword id="KW-0548">Nucleotidyltransferase</keyword>
<keyword id="KW-1185">Reference proteome</keyword>
<keyword id="KW-0804">Transcription</keyword>
<keyword id="KW-0808">Transferase</keyword>